<organismHost>
    <name type="scientific">Homo sapiens</name>
    <name type="common">Human</name>
    <dbReference type="NCBI Taxonomy" id="9606"/>
</organismHost>
<gene>
    <name type="ORF">BMRF2</name>
</gene>
<evidence type="ECO:0000255" key="1"/>
<evidence type="ECO:0000269" key="2">
    <source>
    </source>
</evidence>
<evidence type="ECO:0000269" key="3">
    <source>
    </source>
</evidence>
<evidence type="ECO:0000269" key="4">
    <source>
    </source>
</evidence>
<evidence type="ECO:0000269" key="5">
    <source>
    </source>
</evidence>
<evidence type="ECO:0000269" key="6">
    <source>
    </source>
</evidence>
<evidence type="ECO:0000269" key="7">
    <source>
    </source>
</evidence>
<evidence type="ECO:0000305" key="8"/>
<feature type="chain" id="PRO_0000116254" description="Protein BMRF2">
    <location>
        <begin position="1"/>
        <end position="357"/>
    </location>
</feature>
<feature type="topological domain" description="Virion surface" evidence="1">
    <location>
        <begin position="1"/>
        <end position="11"/>
    </location>
</feature>
<feature type="transmembrane region" evidence="1">
    <location>
        <begin position="12"/>
        <end position="32"/>
    </location>
</feature>
<feature type="topological domain" description="Virion surface" evidence="1">
    <location>
        <begin position="33"/>
        <end position="46"/>
    </location>
</feature>
<feature type="transmembrane region" evidence="1">
    <location>
        <begin position="47"/>
        <end position="67"/>
    </location>
</feature>
<feature type="topological domain" description="Virion surface" evidence="1">
    <location>
        <begin position="68"/>
        <end position="70"/>
    </location>
</feature>
<feature type="transmembrane region" evidence="1">
    <location>
        <begin position="71"/>
        <end position="91"/>
    </location>
</feature>
<feature type="topological domain" description="Virion surface" evidence="1">
    <location>
        <begin position="92"/>
        <end position="98"/>
    </location>
</feature>
<feature type="transmembrane region" evidence="1">
    <location>
        <begin position="99"/>
        <end position="121"/>
    </location>
</feature>
<feature type="topological domain" description="Virion surface" evidence="1">
    <location>
        <begin position="122"/>
        <end position="133"/>
    </location>
</feature>
<feature type="transmembrane region" evidence="1">
    <location>
        <begin position="134"/>
        <end position="154"/>
    </location>
</feature>
<feature type="topological domain" description="Virion surface" evidence="1">
    <location>
        <begin position="155"/>
        <end position="158"/>
    </location>
</feature>
<feature type="transmembrane region" evidence="1">
    <location>
        <begin position="159"/>
        <end position="179"/>
    </location>
</feature>
<feature type="topological domain" description="Virion surface">
    <location>
        <begin position="180"/>
        <end position="217"/>
    </location>
</feature>
<feature type="transmembrane region" evidence="1">
    <location>
        <begin position="218"/>
        <end position="238"/>
    </location>
</feature>
<feature type="topological domain" description="Virion surface" evidence="1">
    <location>
        <begin position="239"/>
        <end position="240"/>
    </location>
</feature>
<feature type="transmembrane region" evidence="1">
    <location>
        <begin position="241"/>
        <end position="261"/>
    </location>
</feature>
<feature type="topological domain" description="Virion surface" evidence="1">
    <location>
        <begin position="262"/>
        <end position="267"/>
    </location>
</feature>
<feature type="transmembrane region" evidence="1">
    <location>
        <begin position="268"/>
        <end position="288"/>
    </location>
</feature>
<feature type="topological domain" description="Virion surface" evidence="1">
    <location>
        <begin position="289"/>
        <end position="298"/>
    </location>
</feature>
<feature type="transmembrane region" evidence="1">
    <location>
        <begin position="299"/>
        <end position="319"/>
    </location>
</feature>
<feature type="topological domain" description="Virion surface" evidence="1">
    <location>
        <begin position="320"/>
        <end position="335"/>
    </location>
</feature>
<feature type="transmembrane region" evidence="1">
    <location>
        <begin position="336"/>
        <end position="356"/>
    </location>
</feature>
<feature type="topological domain" description="Virion surface" evidence="1">
    <location>
        <position position="357"/>
    </location>
</feature>
<feature type="short sequence motif" description="Integrin binding site" evidence="1">
    <location>
        <begin position="199"/>
        <end position="201"/>
    </location>
</feature>
<comment type="function">
    <text evidence="5 6">Facilitates virus attachment to oral epithelial cells by binding to host beta1 integrin family. Participates in rearrangement of cellular actin to increase intercellular contacts by binding BDLF2 and thereby promote virus cell-to-cell spreading.</text>
</comment>
<comment type="subunit">
    <text evidence="2 7">Interacts with BDLF2. Interacts with host beta1 integrin family.</text>
</comment>
<comment type="interaction">
    <interactant intactId="EBI-9348955">
        <id>P03192</id>
    </interactant>
    <interactant intactId="EBI-703066">
        <id>P05556</id>
        <label>ITGB1</label>
    </interactant>
    <organismsDiffer>true</organismsDiffer>
    <experiments>2</experiments>
</comment>
<comment type="subcellular location">
    <subcellularLocation>
        <location evidence="3">Virion membrane</location>
        <topology evidence="1">Multi-pass membrane protein</topology>
    </subcellularLocation>
    <subcellularLocation>
        <location evidence="7">Host cell membrane</location>
        <topology evidence="1">Multi-pass membrane protein</topology>
    </subcellularLocation>
    <text evidence="5">In EBV-infected polarized oral epithelial cells, is transported to the basolateral membranes and colocalizes with beta1 integrin.</text>
</comment>
<comment type="domain">
    <text>The RGD motif presumably is the main binding site to host beta1 integrins.</text>
</comment>
<comment type="PTM">
    <text evidence="4">Extensively glycosylated by O-linked oligosaccharides.</text>
</comment>
<comment type="similarity">
    <text evidence="8">Belongs to the herpesviridae BMRF2 family.</text>
</comment>
<sequence>MFSCKQHLSLGACVFCLGLLASTPFIWCFVFANLLSLEIFSPWQTHVYRLGFPTACLMAVLWTLVPAKHAVRAVTPAIMLNIASALIFFSLRVYSTSTWVSAPCLFLANLPLLCLWPRLAIEIVYICPAIHQRFFELGLLLACTIFALSVVSRALEVSAVFMSPFFIFLALGSGSLAGARRNQIYTSGLERRRSIFCARGDHSVASLKETLHKCPWDLLAISALTVLVVCVMIVLHVHAEVFFGLSRYLPLFLCGAMASGGLYLGHSSIIACVMATLCTLTSVVVYFLHETLGPLGKTVLFISIFVYYFSGVAALSAAMRYKLKKFVNGPLVHLRVVYMCCFVFTFCEYLLVTFIKS</sequence>
<reference key="1">
    <citation type="journal article" date="1984" name="Nature">
        <title>DNA sequence and expression of the B95-8 Epstein-Barr virus genome.</title>
        <authorList>
            <person name="Baer R."/>
            <person name="Bankier A.T."/>
            <person name="Biggin M.D."/>
            <person name="Deininger P.L."/>
            <person name="Farrell P.J."/>
            <person name="Gibson T.J."/>
            <person name="Hatfull G."/>
            <person name="Hudson G.S."/>
            <person name="Satchwell S.C."/>
            <person name="Seguin C."/>
            <person name="Tuffnell P.S."/>
            <person name="Barrell B.G."/>
        </authorList>
    </citation>
    <scope>NUCLEOTIDE SEQUENCE [LARGE SCALE GENOMIC DNA]</scope>
</reference>
<reference key="2">
    <citation type="journal article" date="1987" name="J. Virol.">
        <title>Characterization of a cDNA clone corresponding to a transcript from the Epstein-Barr virus BamHI M fragment: evidence for overlapping mRNAs.</title>
        <authorList>
            <person name="Pfitzner A.J."/>
            <person name="Strominger J.L."/>
            <person name="Speck S.H."/>
        </authorList>
    </citation>
    <scope>NUCLEOTIDE SEQUENCE [GENOMIC DNA]</scope>
</reference>
<reference key="3">
    <citation type="journal article" date="2003" name="Virology">
        <title>Updated Epstein-Barr virus (EBV) DNA sequence and analysis of a promoter for the BART (CST, BARF0) RNAs of EBV.</title>
        <authorList>
            <person name="de Jesus O."/>
            <person name="Smith P.R."/>
            <person name="Spender L.C."/>
            <person name="Elgueta Karstegl C."/>
            <person name="Niller H.H."/>
            <person name="Huang D."/>
            <person name="Farrell P.J."/>
        </authorList>
    </citation>
    <scope>GENOME REANNOTATION</scope>
</reference>
<reference key="4">
    <citation type="journal article" date="1992" name="Arch. Virol.">
        <title>Identification of a protein encoded in the EB-viral open reading frame BMRF2.</title>
        <authorList>
            <person name="Modrow S."/>
            <person name="Hoflacher B."/>
            <person name="Wolf H."/>
        </authorList>
    </citation>
    <scope>IDENTIFICATION</scope>
    <scope>SUBCELLULAR LOCATION</scope>
</reference>
<reference key="5">
    <citation type="journal article" date="2003" name="Nat. Med.">
        <title>Epstein-Barr virus infection of polarized tongue and nasopharyngeal epithelial cells.</title>
        <authorList>
            <person name="Tugizov S.M."/>
            <person name="Berline J.W."/>
            <person name="Palefsky J.M."/>
        </authorList>
    </citation>
    <scope>INTERACTION WITH HOST BETA1 INTEGRIN FAMILY</scope>
</reference>
<reference key="6">
    <citation type="journal article" date="2004" name="Proc. Natl. Acad. Sci. U.S.A.">
        <title>Proteins of purified Epstein-Barr virus.</title>
        <authorList>
            <person name="Johannsen E."/>
            <person name="Luftig M."/>
            <person name="Chase M.R."/>
            <person name="Weicksel S."/>
            <person name="Cahir-McFarland E."/>
            <person name="Illanes D."/>
            <person name="Sarracino D."/>
            <person name="Kieff E."/>
        </authorList>
    </citation>
    <scope>CHARACTERIZATION</scope>
    <scope>SUBCELLULAR LOCATION</scope>
</reference>
<reference key="7">
    <citation type="journal article" date="2008" name="PLoS ONE">
        <title>A gamma-herpesvirus glycoprotein complex manipulates actin to promote viral spread.</title>
        <authorList>
            <person name="Gill M.B."/>
            <person name="Edgar R."/>
            <person name="May J.S."/>
            <person name="Stevenson P.G."/>
        </authorList>
    </citation>
    <scope>FUNCTION</scope>
</reference>
<reference key="8">
    <citation type="journal article" date="2007" name="Virology">
        <title>Characterization of the Epstein-Barr virus glycoprotein BMRF-2.</title>
        <authorList>
            <person name="Xiao J."/>
            <person name="Palefsky J.M."/>
            <person name="Herrera R."/>
            <person name="Tugizov S.M."/>
        </authorList>
    </citation>
    <scope>CHARACTERIZATION</scope>
    <scope>GLYCOSYLATION</scope>
</reference>
<reference key="9">
    <citation type="journal article" date="2008" name="Virology">
        <title>The Epstein-Barr virus BMRF-2 protein facilitates virus attachment to oral epithelial cells.</title>
        <authorList>
            <person name="Xiao J."/>
            <person name="Palefsky J.M."/>
            <person name="Herrera R."/>
            <person name="Berline J."/>
            <person name="Tugizov S.M."/>
        </authorList>
    </citation>
    <scope>FUNCTION</scope>
</reference>
<reference key="10">
    <citation type="journal article" date="2009" name="Virology">
        <title>The BDLF2 protein of Epstein-Barr virus is a type II glycosylated envelope protein whose processing is dependent on coexpression with the BMRF2 protein.</title>
        <authorList>
            <person name="Gore M."/>
            <person name="Hutt-Fletcher L.M."/>
        </authorList>
    </citation>
    <scope>SUBCELLULAR LOCATION</scope>
    <scope>INTERACTION WITH BDLF2</scope>
</reference>
<proteinExistence type="evidence at protein level"/>
<keyword id="KW-0244">Early protein</keyword>
<keyword id="KW-0325">Glycoprotein</keyword>
<keyword id="KW-1032">Host cell membrane</keyword>
<keyword id="KW-1043">Host membrane</keyword>
<keyword id="KW-0945">Host-virus interaction</keyword>
<keyword id="KW-0472">Membrane</keyword>
<keyword id="KW-1185">Reference proteome</keyword>
<keyword id="KW-0812">Transmembrane</keyword>
<keyword id="KW-1161">Viral attachment to host cell</keyword>
<keyword id="KW-0946">Virion</keyword>
<keyword id="KW-1160">Virus entry into host cell</keyword>
<accession>P03192</accession>
<accession>Q777F8</accession>
<name>BMRF2_EBVB9</name>
<protein>
    <recommendedName>
        <fullName>Protein BMRF2</fullName>
    </recommendedName>
</protein>
<dbReference type="EMBL" id="V01555">
    <property type="protein sequence ID" value="CAA24845.1"/>
    <property type="molecule type" value="Genomic_DNA"/>
</dbReference>
<dbReference type="EMBL" id="M17322">
    <property type="protein sequence ID" value="AAA45878.1"/>
    <property type="molecule type" value="Genomic_DNA"/>
</dbReference>
<dbReference type="EMBL" id="AJ507799">
    <property type="protein sequence ID" value="CAD53408.1"/>
    <property type="molecule type" value="Genomic_DNA"/>
</dbReference>
<dbReference type="PIR" id="C43041">
    <property type="entry name" value="QQBE14"/>
</dbReference>
<dbReference type="RefSeq" id="YP_401658.1">
    <property type="nucleotide sequence ID" value="NC_007605.1"/>
</dbReference>
<dbReference type="IntAct" id="P03192">
    <property type="interactions" value="4"/>
</dbReference>
<dbReference type="MINT" id="P03192"/>
<dbReference type="DNASU" id="3783719"/>
<dbReference type="GeneID" id="3783719"/>
<dbReference type="KEGG" id="vg:3783719"/>
<dbReference type="Proteomes" id="UP000153037">
    <property type="component" value="Segment"/>
</dbReference>
<dbReference type="GO" id="GO:0020002">
    <property type="term" value="C:host cell plasma membrane"/>
    <property type="evidence" value="ECO:0007669"/>
    <property type="project" value="UniProtKB-SubCell"/>
</dbReference>
<dbReference type="GO" id="GO:0016020">
    <property type="term" value="C:membrane"/>
    <property type="evidence" value="ECO:0007669"/>
    <property type="project" value="UniProtKB-KW"/>
</dbReference>
<dbReference type="GO" id="GO:0055036">
    <property type="term" value="C:virion membrane"/>
    <property type="evidence" value="ECO:0007669"/>
    <property type="project" value="UniProtKB-SubCell"/>
</dbReference>
<dbReference type="GO" id="GO:0046718">
    <property type="term" value="P:symbiont entry into host cell"/>
    <property type="evidence" value="ECO:0007669"/>
    <property type="project" value="UniProtKB-KW"/>
</dbReference>
<dbReference type="GO" id="GO:0019062">
    <property type="term" value="P:virion attachment to host cell"/>
    <property type="evidence" value="ECO:0007669"/>
    <property type="project" value="UniProtKB-KW"/>
</dbReference>
<dbReference type="InterPro" id="IPR006727">
    <property type="entry name" value="Herpes_BMRF2"/>
</dbReference>
<dbReference type="Pfam" id="PF04633">
    <property type="entry name" value="Herpes_BMRF2"/>
    <property type="match status" value="1"/>
</dbReference>
<organism>
    <name type="scientific">Epstein-Barr virus (strain B95-8)</name>
    <name type="common">HHV-4</name>
    <name type="synonym">Human herpesvirus 4</name>
    <dbReference type="NCBI Taxonomy" id="10377"/>
    <lineage>
        <taxon>Viruses</taxon>
        <taxon>Duplodnaviria</taxon>
        <taxon>Heunggongvirae</taxon>
        <taxon>Peploviricota</taxon>
        <taxon>Herviviricetes</taxon>
        <taxon>Herpesvirales</taxon>
        <taxon>Orthoherpesviridae</taxon>
        <taxon>Gammaherpesvirinae</taxon>
        <taxon>Lymphocryptovirus</taxon>
        <taxon>Lymphocryptovirus humangamma4</taxon>
        <taxon>Epstein-Barr virus (strain GD1)</taxon>
    </lineage>
</organism>